<accession>Q0B5Q1</accession>
<reference key="1">
    <citation type="submission" date="2006-08" db="EMBL/GenBank/DDBJ databases">
        <title>Complete sequence of chromosome 2 of Burkholderia cepacia AMMD.</title>
        <authorList>
            <person name="Copeland A."/>
            <person name="Lucas S."/>
            <person name="Lapidus A."/>
            <person name="Barry K."/>
            <person name="Detter J.C."/>
            <person name="Glavina del Rio T."/>
            <person name="Hammon N."/>
            <person name="Israni S."/>
            <person name="Pitluck S."/>
            <person name="Bruce D."/>
            <person name="Chain P."/>
            <person name="Malfatti S."/>
            <person name="Shin M."/>
            <person name="Vergez L."/>
            <person name="Schmutz J."/>
            <person name="Larimer F."/>
            <person name="Land M."/>
            <person name="Hauser L."/>
            <person name="Kyrpides N."/>
            <person name="Kim E."/>
            <person name="Parke J."/>
            <person name="Coenye T."/>
            <person name="Konstantinidis K."/>
            <person name="Ramette A."/>
            <person name="Tiedje J."/>
            <person name="Richardson P."/>
        </authorList>
    </citation>
    <scope>NUCLEOTIDE SEQUENCE [LARGE SCALE GENOMIC DNA]</scope>
    <source>
        <strain>ATCC BAA-244 / DSM 16087 / CCUG 44356 / LMG 19182 / AMMD</strain>
    </source>
</reference>
<proteinExistence type="inferred from homology"/>
<dbReference type="EC" id="1.1.1.103" evidence="1"/>
<dbReference type="EMBL" id="CP000441">
    <property type="protein sequence ID" value="ABI90522.1"/>
    <property type="molecule type" value="Genomic_DNA"/>
</dbReference>
<dbReference type="RefSeq" id="WP_011659909.1">
    <property type="nucleotide sequence ID" value="NC_008391.1"/>
</dbReference>
<dbReference type="SMR" id="Q0B5Q1"/>
<dbReference type="GeneID" id="93087918"/>
<dbReference type="KEGG" id="bam:Bamb_4973"/>
<dbReference type="PATRIC" id="fig|339670.21.peg.5344"/>
<dbReference type="eggNOG" id="COG1063">
    <property type="taxonomic scope" value="Bacteria"/>
</dbReference>
<dbReference type="UniPathway" id="UPA00046">
    <property type="reaction ID" value="UER00505"/>
</dbReference>
<dbReference type="Proteomes" id="UP000000662">
    <property type="component" value="Chromosome 2"/>
</dbReference>
<dbReference type="GO" id="GO:0005737">
    <property type="term" value="C:cytoplasm"/>
    <property type="evidence" value="ECO:0007669"/>
    <property type="project" value="UniProtKB-SubCell"/>
</dbReference>
<dbReference type="GO" id="GO:0008743">
    <property type="term" value="F:L-threonine 3-dehydrogenase activity"/>
    <property type="evidence" value="ECO:0007669"/>
    <property type="project" value="UniProtKB-UniRule"/>
</dbReference>
<dbReference type="GO" id="GO:0008270">
    <property type="term" value="F:zinc ion binding"/>
    <property type="evidence" value="ECO:0007669"/>
    <property type="project" value="UniProtKB-UniRule"/>
</dbReference>
<dbReference type="GO" id="GO:0019518">
    <property type="term" value="P:L-threonine catabolic process to glycine"/>
    <property type="evidence" value="ECO:0007669"/>
    <property type="project" value="UniProtKB-UniPathway"/>
</dbReference>
<dbReference type="Gene3D" id="3.90.180.10">
    <property type="entry name" value="Medium-chain alcohol dehydrogenases, catalytic domain"/>
    <property type="match status" value="1"/>
</dbReference>
<dbReference type="Gene3D" id="3.40.50.720">
    <property type="entry name" value="NAD(P)-binding Rossmann-like Domain"/>
    <property type="match status" value="1"/>
</dbReference>
<dbReference type="HAMAP" id="MF_00627">
    <property type="entry name" value="Thr_dehydrog"/>
    <property type="match status" value="1"/>
</dbReference>
<dbReference type="InterPro" id="IPR013149">
    <property type="entry name" value="ADH-like_C"/>
</dbReference>
<dbReference type="InterPro" id="IPR013154">
    <property type="entry name" value="ADH-like_N"/>
</dbReference>
<dbReference type="InterPro" id="IPR002328">
    <property type="entry name" value="ADH_Zn_CS"/>
</dbReference>
<dbReference type="InterPro" id="IPR011032">
    <property type="entry name" value="GroES-like_sf"/>
</dbReference>
<dbReference type="InterPro" id="IPR004627">
    <property type="entry name" value="L-Threonine_3-DHase"/>
</dbReference>
<dbReference type="InterPro" id="IPR036291">
    <property type="entry name" value="NAD(P)-bd_dom_sf"/>
</dbReference>
<dbReference type="InterPro" id="IPR020843">
    <property type="entry name" value="PKS_ER"/>
</dbReference>
<dbReference type="InterPro" id="IPR050129">
    <property type="entry name" value="Zn_alcohol_dh"/>
</dbReference>
<dbReference type="NCBIfam" id="NF003808">
    <property type="entry name" value="PRK05396.1"/>
    <property type="match status" value="1"/>
</dbReference>
<dbReference type="NCBIfam" id="TIGR00692">
    <property type="entry name" value="tdh"/>
    <property type="match status" value="1"/>
</dbReference>
<dbReference type="PANTHER" id="PTHR43401">
    <property type="entry name" value="L-THREONINE 3-DEHYDROGENASE"/>
    <property type="match status" value="1"/>
</dbReference>
<dbReference type="PANTHER" id="PTHR43401:SF2">
    <property type="entry name" value="L-THREONINE 3-DEHYDROGENASE"/>
    <property type="match status" value="1"/>
</dbReference>
<dbReference type="Pfam" id="PF08240">
    <property type="entry name" value="ADH_N"/>
    <property type="match status" value="1"/>
</dbReference>
<dbReference type="Pfam" id="PF00107">
    <property type="entry name" value="ADH_zinc_N"/>
    <property type="match status" value="1"/>
</dbReference>
<dbReference type="SMART" id="SM00829">
    <property type="entry name" value="PKS_ER"/>
    <property type="match status" value="1"/>
</dbReference>
<dbReference type="SUPFAM" id="SSF50129">
    <property type="entry name" value="GroES-like"/>
    <property type="match status" value="1"/>
</dbReference>
<dbReference type="SUPFAM" id="SSF51735">
    <property type="entry name" value="NAD(P)-binding Rossmann-fold domains"/>
    <property type="match status" value="1"/>
</dbReference>
<dbReference type="PROSITE" id="PS00059">
    <property type="entry name" value="ADH_ZINC"/>
    <property type="match status" value="1"/>
</dbReference>
<organism>
    <name type="scientific">Burkholderia ambifaria (strain ATCC BAA-244 / DSM 16087 / CCUG 44356 / LMG 19182 / AMMD)</name>
    <name type="common">Burkholderia cepacia (strain AMMD)</name>
    <dbReference type="NCBI Taxonomy" id="339670"/>
    <lineage>
        <taxon>Bacteria</taxon>
        <taxon>Pseudomonadati</taxon>
        <taxon>Pseudomonadota</taxon>
        <taxon>Betaproteobacteria</taxon>
        <taxon>Burkholderiales</taxon>
        <taxon>Burkholderiaceae</taxon>
        <taxon>Burkholderia</taxon>
        <taxon>Burkholderia cepacia complex</taxon>
    </lineage>
</organism>
<gene>
    <name evidence="1" type="primary">tdh</name>
    <name type="ordered locus">Bamb_4973</name>
</gene>
<sequence>MKALAKLERGPGLTLTRVKRPEVGHNDVLIKIHRTAICGTDIHIWKWDDWAQKTIPVPMHVGHEYVGEIVEMGQEVRGFAIGDRVSGEGHITCGFCRNCRAGRRHLCRNTVGVGVNREGAFAEYLAIPAFNAFKIPPEISDDLASIFDPFGNATHTALSFNLVGEDVLITGAGPIGVMAAAIAKHVGARNVVITDINDYRLELARKMGATRAVNVSRESLRDVMADLHMTEGFDVGLEMSGVPSAFTSMLEAMNHGGKIALLGIPPAQTAIDWNQVIFKGLEIKGIYGREMFETWYKMVAMLQSGLDLSPIITHRFAADDYEKGFAAMLSGESGKVILDWTV</sequence>
<feature type="chain" id="PRO_1000051619" description="L-threonine 3-dehydrogenase">
    <location>
        <begin position="1"/>
        <end position="342"/>
    </location>
</feature>
<feature type="active site" description="Charge relay system" evidence="1">
    <location>
        <position position="40"/>
    </location>
</feature>
<feature type="active site" description="Charge relay system" evidence="1">
    <location>
        <position position="43"/>
    </location>
</feature>
<feature type="binding site" evidence="1">
    <location>
        <position position="38"/>
    </location>
    <ligand>
        <name>Zn(2+)</name>
        <dbReference type="ChEBI" id="CHEBI:29105"/>
        <label>1</label>
        <note>catalytic</note>
    </ligand>
</feature>
<feature type="binding site" evidence="1">
    <location>
        <position position="63"/>
    </location>
    <ligand>
        <name>Zn(2+)</name>
        <dbReference type="ChEBI" id="CHEBI:29105"/>
        <label>1</label>
        <note>catalytic</note>
    </ligand>
</feature>
<feature type="binding site" evidence="1">
    <location>
        <position position="64"/>
    </location>
    <ligand>
        <name>Zn(2+)</name>
        <dbReference type="ChEBI" id="CHEBI:29105"/>
        <label>1</label>
        <note>catalytic</note>
    </ligand>
</feature>
<feature type="binding site" evidence="1">
    <location>
        <position position="93"/>
    </location>
    <ligand>
        <name>Zn(2+)</name>
        <dbReference type="ChEBI" id="CHEBI:29105"/>
        <label>2</label>
    </ligand>
</feature>
<feature type="binding site" evidence="1">
    <location>
        <position position="96"/>
    </location>
    <ligand>
        <name>Zn(2+)</name>
        <dbReference type="ChEBI" id="CHEBI:29105"/>
        <label>2</label>
    </ligand>
</feature>
<feature type="binding site" evidence="1">
    <location>
        <position position="99"/>
    </location>
    <ligand>
        <name>Zn(2+)</name>
        <dbReference type="ChEBI" id="CHEBI:29105"/>
        <label>2</label>
    </ligand>
</feature>
<feature type="binding site" evidence="1">
    <location>
        <position position="107"/>
    </location>
    <ligand>
        <name>Zn(2+)</name>
        <dbReference type="ChEBI" id="CHEBI:29105"/>
        <label>2</label>
    </ligand>
</feature>
<feature type="binding site" evidence="1">
    <location>
        <position position="175"/>
    </location>
    <ligand>
        <name>NAD(+)</name>
        <dbReference type="ChEBI" id="CHEBI:57540"/>
    </ligand>
</feature>
<feature type="binding site" evidence="1">
    <location>
        <position position="195"/>
    </location>
    <ligand>
        <name>NAD(+)</name>
        <dbReference type="ChEBI" id="CHEBI:57540"/>
    </ligand>
</feature>
<feature type="binding site" evidence="1">
    <location>
        <position position="200"/>
    </location>
    <ligand>
        <name>NAD(+)</name>
        <dbReference type="ChEBI" id="CHEBI:57540"/>
    </ligand>
</feature>
<feature type="binding site" evidence="1">
    <location>
        <begin position="262"/>
        <end position="264"/>
    </location>
    <ligand>
        <name>NAD(+)</name>
        <dbReference type="ChEBI" id="CHEBI:57540"/>
    </ligand>
</feature>
<feature type="binding site" evidence="1">
    <location>
        <begin position="286"/>
        <end position="287"/>
    </location>
    <ligand>
        <name>NAD(+)</name>
        <dbReference type="ChEBI" id="CHEBI:57540"/>
    </ligand>
</feature>
<feature type="site" description="Important for catalytic activity for the proton relay mechanism but does not participate directly in the coordination of zinc atom" evidence="1">
    <location>
        <position position="148"/>
    </location>
</feature>
<comment type="function">
    <text evidence="1">Catalyzes the NAD(+)-dependent oxidation of L-threonine to 2-amino-3-ketobutyrate.</text>
</comment>
<comment type="catalytic activity">
    <reaction evidence="1">
        <text>L-threonine + NAD(+) = (2S)-2-amino-3-oxobutanoate + NADH + H(+)</text>
        <dbReference type="Rhea" id="RHEA:13161"/>
        <dbReference type="ChEBI" id="CHEBI:15378"/>
        <dbReference type="ChEBI" id="CHEBI:57540"/>
        <dbReference type="ChEBI" id="CHEBI:57926"/>
        <dbReference type="ChEBI" id="CHEBI:57945"/>
        <dbReference type="ChEBI" id="CHEBI:78948"/>
        <dbReference type="EC" id="1.1.1.103"/>
    </reaction>
</comment>
<comment type="cofactor">
    <cofactor evidence="1">
        <name>Zn(2+)</name>
        <dbReference type="ChEBI" id="CHEBI:29105"/>
    </cofactor>
    <text evidence="1">Binds 2 Zn(2+) ions per subunit.</text>
</comment>
<comment type="pathway">
    <text evidence="1">Amino-acid degradation; L-threonine degradation via oxydo-reductase pathway; glycine from L-threonine: step 1/2.</text>
</comment>
<comment type="subunit">
    <text evidence="1">Homotetramer.</text>
</comment>
<comment type="subcellular location">
    <subcellularLocation>
        <location evidence="1">Cytoplasm</location>
    </subcellularLocation>
</comment>
<comment type="similarity">
    <text evidence="1">Belongs to the zinc-containing alcohol dehydrogenase family.</text>
</comment>
<name>TDH_BURCM</name>
<evidence type="ECO:0000255" key="1">
    <source>
        <dbReference type="HAMAP-Rule" id="MF_00627"/>
    </source>
</evidence>
<keyword id="KW-0963">Cytoplasm</keyword>
<keyword id="KW-0479">Metal-binding</keyword>
<keyword id="KW-0520">NAD</keyword>
<keyword id="KW-0560">Oxidoreductase</keyword>
<keyword id="KW-0862">Zinc</keyword>
<protein>
    <recommendedName>
        <fullName evidence="1">L-threonine 3-dehydrogenase</fullName>
        <shortName evidence="1">TDH</shortName>
        <ecNumber evidence="1">1.1.1.103</ecNumber>
    </recommendedName>
</protein>